<sequence>MKGKAGGKAADAAEKVAASNRRARFDYDVEDTWEAGLVLTGSEVKSLREGNVNLSDAYAMPRGEELWLLNCRIGEYQQAAHFGHAPLRDRKLLMNRAEIDRVRGKVEQRGYTLVPLRIYFKQGWAKVELGLARGRSHEDRRGAIAERESKREMDRALARGRRR</sequence>
<dbReference type="EMBL" id="CP001131">
    <property type="protein sequence ID" value="ACG74949.1"/>
    <property type="molecule type" value="Genomic_DNA"/>
</dbReference>
<dbReference type="RefSeq" id="WP_012527713.1">
    <property type="nucleotide sequence ID" value="NC_011145.1"/>
</dbReference>
<dbReference type="SMR" id="B4UDZ1"/>
<dbReference type="KEGG" id="ank:AnaeK_3738"/>
<dbReference type="HOGENOM" id="CLU_108953_0_1_7"/>
<dbReference type="OrthoDB" id="9805462at2"/>
<dbReference type="Proteomes" id="UP000001871">
    <property type="component" value="Chromosome"/>
</dbReference>
<dbReference type="GO" id="GO:0005829">
    <property type="term" value="C:cytosol"/>
    <property type="evidence" value="ECO:0007669"/>
    <property type="project" value="TreeGrafter"/>
</dbReference>
<dbReference type="GO" id="GO:0003723">
    <property type="term" value="F:RNA binding"/>
    <property type="evidence" value="ECO:0007669"/>
    <property type="project" value="UniProtKB-UniRule"/>
</dbReference>
<dbReference type="GO" id="GO:0070929">
    <property type="term" value="P:trans-translation"/>
    <property type="evidence" value="ECO:0007669"/>
    <property type="project" value="UniProtKB-UniRule"/>
</dbReference>
<dbReference type="CDD" id="cd09294">
    <property type="entry name" value="SmpB"/>
    <property type="match status" value="1"/>
</dbReference>
<dbReference type="Gene3D" id="2.40.280.10">
    <property type="match status" value="1"/>
</dbReference>
<dbReference type="HAMAP" id="MF_00023">
    <property type="entry name" value="SmpB"/>
    <property type="match status" value="1"/>
</dbReference>
<dbReference type="InterPro" id="IPR023620">
    <property type="entry name" value="SmpB"/>
</dbReference>
<dbReference type="InterPro" id="IPR000037">
    <property type="entry name" value="SsrA-bd_prot"/>
</dbReference>
<dbReference type="InterPro" id="IPR020081">
    <property type="entry name" value="SsrA-bd_prot_CS"/>
</dbReference>
<dbReference type="NCBIfam" id="NF003843">
    <property type="entry name" value="PRK05422.1"/>
    <property type="match status" value="1"/>
</dbReference>
<dbReference type="NCBIfam" id="TIGR00086">
    <property type="entry name" value="smpB"/>
    <property type="match status" value="1"/>
</dbReference>
<dbReference type="PANTHER" id="PTHR30308:SF2">
    <property type="entry name" value="SSRA-BINDING PROTEIN"/>
    <property type="match status" value="1"/>
</dbReference>
<dbReference type="PANTHER" id="PTHR30308">
    <property type="entry name" value="TMRNA-BINDING COMPONENT OF TRANS-TRANSLATION TAGGING COMPLEX"/>
    <property type="match status" value="1"/>
</dbReference>
<dbReference type="Pfam" id="PF01668">
    <property type="entry name" value="SmpB"/>
    <property type="match status" value="1"/>
</dbReference>
<dbReference type="SUPFAM" id="SSF74982">
    <property type="entry name" value="Small protein B (SmpB)"/>
    <property type="match status" value="1"/>
</dbReference>
<dbReference type="PROSITE" id="PS01317">
    <property type="entry name" value="SSRP"/>
    <property type="match status" value="1"/>
</dbReference>
<proteinExistence type="inferred from homology"/>
<accession>B4UDZ1</accession>
<organism>
    <name type="scientific">Anaeromyxobacter sp. (strain K)</name>
    <dbReference type="NCBI Taxonomy" id="447217"/>
    <lineage>
        <taxon>Bacteria</taxon>
        <taxon>Pseudomonadati</taxon>
        <taxon>Myxococcota</taxon>
        <taxon>Myxococcia</taxon>
        <taxon>Myxococcales</taxon>
        <taxon>Cystobacterineae</taxon>
        <taxon>Anaeromyxobacteraceae</taxon>
        <taxon>Anaeromyxobacter</taxon>
    </lineage>
</organism>
<keyword id="KW-0963">Cytoplasm</keyword>
<keyword id="KW-0694">RNA-binding</keyword>
<protein>
    <recommendedName>
        <fullName evidence="1">SsrA-binding protein</fullName>
    </recommendedName>
    <alternativeName>
        <fullName evidence="1">Small protein B</fullName>
    </alternativeName>
</protein>
<name>SSRP_ANASK</name>
<evidence type="ECO:0000255" key="1">
    <source>
        <dbReference type="HAMAP-Rule" id="MF_00023"/>
    </source>
</evidence>
<evidence type="ECO:0000256" key="2">
    <source>
        <dbReference type="SAM" id="MobiDB-lite"/>
    </source>
</evidence>
<comment type="function">
    <text evidence="1">Required for rescue of stalled ribosomes mediated by trans-translation. Binds to transfer-messenger RNA (tmRNA), required for stable association of tmRNA with ribosomes. tmRNA and SmpB together mimic tRNA shape, replacing the anticodon stem-loop with SmpB. tmRNA is encoded by the ssrA gene; the 2 termini fold to resemble tRNA(Ala) and it encodes a 'tag peptide', a short internal open reading frame. During trans-translation Ala-aminoacylated tmRNA acts like a tRNA, entering the A-site of stalled ribosomes, displacing the stalled mRNA. The ribosome then switches to translate the ORF on the tmRNA; the nascent peptide is terminated with the 'tag peptide' encoded by the tmRNA and targeted for degradation. The ribosome is freed to recommence translation, which seems to be the essential function of trans-translation.</text>
</comment>
<comment type="subcellular location">
    <subcellularLocation>
        <location evidence="1">Cytoplasm</location>
    </subcellularLocation>
    <text evidence="1">The tmRNA-SmpB complex associates with stalled 70S ribosomes.</text>
</comment>
<comment type="similarity">
    <text evidence="1">Belongs to the SmpB family.</text>
</comment>
<reference key="1">
    <citation type="submission" date="2008-08" db="EMBL/GenBank/DDBJ databases">
        <title>Complete sequence of Anaeromyxobacter sp. K.</title>
        <authorList>
            <consortium name="US DOE Joint Genome Institute"/>
            <person name="Lucas S."/>
            <person name="Copeland A."/>
            <person name="Lapidus A."/>
            <person name="Glavina del Rio T."/>
            <person name="Dalin E."/>
            <person name="Tice H."/>
            <person name="Bruce D."/>
            <person name="Goodwin L."/>
            <person name="Pitluck S."/>
            <person name="Saunders E."/>
            <person name="Brettin T."/>
            <person name="Detter J.C."/>
            <person name="Han C."/>
            <person name="Larimer F."/>
            <person name="Land M."/>
            <person name="Hauser L."/>
            <person name="Kyrpides N."/>
            <person name="Ovchinnikiva G."/>
            <person name="Beliaev A."/>
        </authorList>
    </citation>
    <scope>NUCLEOTIDE SEQUENCE [LARGE SCALE GENOMIC DNA]</scope>
    <source>
        <strain>K</strain>
    </source>
</reference>
<feature type="chain" id="PRO_1000090134" description="SsrA-binding protein">
    <location>
        <begin position="1"/>
        <end position="163"/>
    </location>
</feature>
<feature type="region of interest" description="Disordered" evidence="2">
    <location>
        <begin position="138"/>
        <end position="163"/>
    </location>
</feature>
<feature type="compositionally biased region" description="Basic and acidic residues" evidence="2">
    <location>
        <begin position="138"/>
        <end position="157"/>
    </location>
</feature>
<gene>
    <name evidence="1" type="primary">smpB</name>
    <name type="ordered locus">AnaeK_3738</name>
</gene>